<reference key="1">
    <citation type="submission" date="2009-06" db="EMBL/GenBank/DDBJ databases">
        <title>Complete sequence of Thermotogales bacterium TBF 19.5.1.</title>
        <authorList>
            <consortium name="US DOE Joint Genome Institute"/>
            <person name="Lucas S."/>
            <person name="Copeland A."/>
            <person name="Lapidus A."/>
            <person name="Glavina del Rio T."/>
            <person name="Tice H."/>
            <person name="Bruce D."/>
            <person name="Goodwin L."/>
            <person name="Pitluck S."/>
            <person name="Chertkov O."/>
            <person name="Brettin T."/>
            <person name="Detter J.C."/>
            <person name="Han C."/>
            <person name="Schmutz J."/>
            <person name="Larimer F."/>
            <person name="Land M."/>
            <person name="Hauser L."/>
            <person name="Kyrpides N."/>
            <person name="Ovchinnikova G."/>
            <person name="Noll K."/>
        </authorList>
    </citation>
    <scope>NUCLEOTIDE SEQUENCE [LARGE SCALE GENOMIC DNA]</scope>
    <source>
        <strain>ATCC BAA-1733 / DSM 21960 / TBF 19.5.1</strain>
    </source>
</reference>
<protein>
    <recommendedName>
        <fullName evidence="1">2-C-methyl-D-erythritol 2,4-cyclodiphosphate synthase</fullName>
        <shortName evidence="1">MECDP-synthase</shortName>
        <shortName evidence="1">MECPP-synthase</shortName>
        <shortName evidence="1">MECPS</shortName>
        <ecNumber evidence="1">4.6.1.12</ecNumber>
    </recommendedName>
</protein>
<evidence type="ECO:0000255" key="1">
    <source>
        <dbReference type="HAMAP-Rule" id="MF_00107"/>
    </source>
</evidence>
<organism>
    <name type="scientific">Kosmotoga olearia (strain ATCC BAA-1733 / DSM 21960 / TBF 19.5.1)</name>
    <dbReference type="NCBI Taxonomy" id="521045"/>
    <lineage>
        <taxon>Bacteria</taxon>
        <taxon>Thermotogati</taxon>
        <taxon>Thermotogota</taxon>
        <taxon>Thermotogae</taxon>
        <taxon>Kosmotogales</taxon>
        <taxon>Kosmotogaceae</taxon>
        <taxon>Kosmotoga</taxon>
    </lineage>
</organism>
<feature type="chain" id="PRO_1000202881" description="2-C-methyl-D-erythritol 2,4-cyclodiphosphate synthase">
    <location>
        <begin position="1"/>
        <end position="156"/>
    </location>
</feature>
<feature type="binding site" evidence="1">
    <location>
        <begin position="9"/>
        <end position="11"/>
    </location>
    <ligand>
        <name>4-CDP-2-C-methyl-D-erythritol 2-phosphate</name>
        <dbReference type="ChEBI" id="CHEBI:57919"/>
    </ligand>
</feature>
<feature type="binding site" evidence="1">
    <location>
        <position position="9"/>
    </location>
    <ligand>
        <name>a divalent metal cation</name>
        <dbReference type="ChEBI" id="CHEBI:60240"/>
    </ligand>
</feature>
<feature type="binding site" evidence="1">
    <location>
        <position position="11"/>
    </location>
    <ligand>
        <name>a divalent metal cation</name>
        <dbReference type="ChEBI" id="CHEBI:60240"/>
    </ligand>
</feature>
<feature type="binding site" evidence="1">
    <location>
        <begin position="36"/>
        <end position="37"/>
    </location>
    <ligand>
        <name>4-CDP-2-C-methyl-D-erythritol 2-phosphate</name>
        <dbReference type="ChEBI" id="CHEBI:57919"/>
    </ligand>
</feature>
<feature type="binding site" evidence="1">
    <location>
        <position position="44"/>
    </location>
    <ligand>
        <name>a divalent metal cation</name>
        <dbReference type="ChEBI" id="CHEBI:60240"/>
    </ligand>
</feature>
<feature type="binding site" evidence="1">
    <location>
        <begin position="58"/>
        <end position="60"/>
    </location>
    <ligand>
        <name>4-CDP-2-C-methyl-D-erythritol 2-phosphate</name>
        <dbReference type="ChEBI" id="CHEBI:57919"/>
    </ligand>
</feature>
<feature type="site" description="Transition state stabilizer" evidence="1">
    <location>
        <position position="36"/>
    </location>
</feature>
<feature type="site" description="Transition state stabilizer" evidence="1">
    <location>
        <position position="134"/>
    </location>
</feature>
<dbReference type="EC" id="4.6.1.12" evidence="1"/>
<dbReference type="EMBL" id="CP001634">
    <property type="protein sequence ID" value="ACR80548.1"/>
    <property type="molecule type" value="Genomic_DNA"/>
</dbReference>
<dbReference type="RefSeq" id="WP_015869191.1">
    <property type="nucleotide sequence ID" value="NC_012785.1"/>
</dbReference>
<dbReference type="SMR" id="C5CGG7"/>
<dbReference type="STRING" id="521045.Kole_1867"/>
<dbReference type="KEGG" id="kol:Kole_1867"/>
<dbReference type="eggNOG" id="COG0245">
    <property type="taxonomic scope" value="Bacteria"/>
</dbReference>
<dbReference type="HOGENOM" id="CLU_084630_2_1_0"/>
<dbReference type="OrthoDB" id="9804336at2"/>
<dbReference type="UniPathway" id="UPA00056">
    <property type="reaction ID" value="UER00095"/>
</dbReference>
<dbReference type="Proteomes" id="UP000002382">
    <property type="component" value="Chromosome"/>
</dbReference>
<dbReference type="GO" id="GO:0008685">
    <property type="term" value="F:2-C-methyl-D-erythritol 2,4-cyclodiphosphate synthase activity"/>
    <property type="evidence" value="ECO:0007669"/>
    <property type="project" value="UniProtKB-UniRule"/>
</dbReference>
<dbReference type="GO" id="GO:0046872">
    <property type="term" value="F:metal ion binding"/>
    <property type="evidence" value="ECO:0007669"/>
    <property type="project" value="UniProtKB-KW"/>
</dbReference>
<dbReference type="GO" id="GO:0019288">
    <property type="term" value="P:isopentenyl diphosphate biosynthetic process, methylerythritol 4-phosphate pathway"/>
    <property type="evidence" value="ECO:0007669"/>
    <property type="project" value="UniProtKB-UniRule"/>
</dbReference>
<dbReference type="GO" id="GO:0016114">
    <property type="term" value="P:terpenoid biosynthetic process"/>
    <property type="evidence" value="ECO:0007669"/>
    <property type="project" value="InterPro"/>
</dbReference>
<dbReference type="CDD" id="cd00554">
    <property type="entry name" value="MECDP_synthase"/>
    <property type="match status" value="1"/>
</dbReference>
<dbReference type="Gene3D" id="3.30.1330.50">
    <property type="entry name" value="2-C-methyl-D-erythritol 2,4-cyclodiphosphate synthase"/>
    <property type="match status" value="1"/>
</dbReference>
<dbReference type="HAMAP" id="MF_00107">
    <property type="entry name" value="IspF"/>
    <property type="match status" value="1"/>
</dbReference>
<dbReference type="InterPro" id="IPR003526">
    <property type="entry name" value="MECDP_synthase"/>
</dbReference>
<dbReference type="InterPro" id="IPR020555">
    <property type="entry name" value="MECDP_synthase_CS"/>
</dbReference>
<dbReference type="InterPro" id="IPR036571">
    <property type="entry name" value="MECDP_synthase_sf"/>
</dbReference>
<dbReference type="NCBIfam" id="TIGR00151">
    <property type="entry name" value="ispF"/>
    <property type="match status" value="1"/>
</dbReference>
<dbReference type="PANTHER" id="PTHR43181">
    <property type="entry name" value="2-C-METHYL-D-ERYTHRITOL 2,4-CYCLODIPHOSPHATE SYNTHASE, CHLOROPLASTIC"/>
    <property type="match status" value="1"/>
</dbReference>
<dbReference type="PANTHER" id="PTHR43181:SF1">
    <property type="entry name" value="2-C-METHYL-D-ERYTHRITOL 2,4-CYCLODIPHOSPHATE SYNTHASE, CHLOROPLASTIC"/>
    <property type="match status" value="1"/>
</dbReference>
<dbReference type="Pfam" id="PF02542">
    <property type="entry name" value="YgbB"/>
    <property type="match status" value="1"/>
</dbReference>
<dbReference type="SUPFAM" id="SSF69765">
    <property type="entry name" value="IpsF-like"/>
    <property type="match status" value="1"/>
</dbReference>
<dbReference type="PROSITE" id="PS01350">
    <property type="entry name" value="ISPF"/>
    <property type="match status" value="1"/>
</dbReference>
<sequence length="156" mass="17106">MYRVGIGFDAHPLEANKKGLYLGGVKVSEEYSSIGHSDGDALIHAIVDAILGATNAGNIGIWFPENEENRGRRSTEFLEIIRKKILAGKYEILNIDSVIIIDKVRMNPHIENIRLKLARILGISKGNINVKPKSGNTLYGNSVSVYAVCMLKKVGT</sequence>
<name>ISPF_KOSOT</name>
<accession>C5CGG7</accession>
<proteinExistence type="inferred from homology"/>
<keyword id="KW-0414">Isoprene biosynthesis</keyword>
<keyword id="KW-0456">Lyase</keyword>
<keyword id="KW-0479">Metal-binding</keyword>
<keyword id="KW-1185">Reference proteome</keyword>
<comment type="function">
    <text evidence="1">Involved in the biosynthesis of isopentenyl diphosphate (IPP) and dimethylallyl diphosphate (DMAPP), two major building blocks of isoprenoid compounds. Catalyzes the conversion of 4-diphosphocytidyl-2-C-methyl-D-erythritol 2-phosphate (CDP-ME2P) to 2-C-methyl-D-erythritol 2,4-cyclodiphosphate (ME-CPP) with a corresponding release of cytidine 5-monophosphate (CMP).</text>
</comment>
<comment type="catalytic activity">
    <reaction evidence="1">
        <text>4-CDP-2-C-methyl-D-erythritol 2-phosphate = 2-C-methyl-D-erythritol 2,4-cyclic diphosphate + CMP</text>
        <dbReference type="Rhea" id="RHEA:23864"/>
        <dbReference type="ChEBI" id="CHEBI:57919"/>
        <dbReference type="ChEBI" id="CHEBI:58483"/>
        <dbReference type="ChEBI" id="CHEBI:60377"/>
        <dbReference type="EC" id="4.6.1.12"/>
    </reaction>
</comment>
<comment type="cofactor">
    <cofactor evidence="1">
        <name>a divalent metal cation</name>
        <dbReference type="ChEBI" id="CHEBI:60240"/>
    </cofactor>
    <text evidence="1">Binds 1 divalent metal cation per subunit.</text>
</comment>
<comment type="pathway">
    <text evidence="1">Isoprenoid biosynthesis; isopentenyl diphosphate biosynthesis via DXP pathway; isopentenyl diphosphate from 1-deoxy-D-xylulose 5-phosphate: step 4/6.</text>
</comment>
<comment type="subunit">
    <text evidence="1">Homotrimer.</text>
</comment>
<comment type="similarity">
    <text evidence="1">Belongs to the IspF family.</text>
</comment>
<gene>
    <name evidence="1" type="primary">ispF</name>
    <name type="ordered locus">Kole_1867</name>
</gene>